<dbReference type="EC" id="4.1.3.3" evidence="1"/>
<dbReference type="EMBL" id="CU928158">
    <property type="protein sequence ID" value="CAQ90689.1"/>
    <property type="molecule type" value="Genomic_DNA"/>
</dbReference>
<dbReference type="RefSeq" id="WP_000224720.1">
    <property type="nucleotide sequence ID" value="NC_011740.1"/>
</dbReference>
<dbReference type="SMR" id="B7LRJ3"/>
<dbReference type="GeneID" id="75060186"/>
<dbReference type="KEGG" id="efe:EFER_3196"/>
<dbReference type="HOGENOM" id="CLU_049343_6_0_6"/>
<dbReference type="OrthoDB" id="199953at2"/>
<dbReference type="UniPathway" id="UPA00629">
    <property type="reaction ID" value="UER00680"/>
</dbReference>
<dbReference type="Proteomes" id="UP000000745">
    <property type="component" value="Chromosome"/>
</dbReference>
<dbReference type="GO" id="GO:0005829">
    <property type="term" value="C:cytosol"/>
    <property type="evidence" value="ECO:0007669"/>
    <property type="project" value="TreeGrafter"/>
</dbReference>
<dbReference type="GO" id="GO:0008747">
    <property type="term" value="F:N-acetylneuraminate lyase activity"/>
    <property type="evidence" value="ECO:0007669"/>
    <property type="project" value="UniProtKB-UniRule"/>
</dbReference>
<dbReference type="GO" id="GO:0005975">
    <property type="term" value="P:carbohydrate metabolic process"/>
    <property type="evidence" value="ECO:0007669"/>
    <property type="project" value="UniProtKB-UniRule"/>
</dbReference>
<dbReference type="GO" id="GO:0019262">
    <property type="term" value="P:N-acetylneuraminate catabolic process"/>
    <property type="evidence" value="ECO:0007669"/>
    <property type="project" value="UniProtKB-UniRule"/>
</dbReference>
<dbReference type="CDD" id="cd00954">
    <property type="entry name" value="NAL"/>
    <property type="match status" value="1"/>
</dbReference>
<dbReference type="FunFam" id="3.20.20.70:FF:000039">
    <property type="entry name" value="N-acetylneuraminate lyase"/>
    <property type="match status" value="1"/>
</dbReference>
<dbReference type="Gene3D" id="3.20.20.70">
    <property type="entry name" value="Aldolase class I"/>
    <property type="match status" value="1"/>
</dbReference>
<dbReference type="HAMAP" id="MF_01237">
    <property type="entry name" value="N_acetylneuram_lyase"/>
    <property type="match status" value="1"/>
</dbReference>
<dbReference type="InterPro" id="IPR013785">
    <property type="entry name" value="Aldolase_TIM"/>
</dbReference>
<dbReference type="InterPro" id="IPR002220">
    <property type="entry name" value="DapA-like"/>
</dbReference>
<dbReference type="InterPro" id="IPR005264">
    <property type="entry name" value="NanA"/>
</dbReference>
<dbReference type="InterPro" id="IPR020625">
    <property type="entry name" value="Schiff_base-form_aldolases_AS"/>
</dbReference>
<dbReference type="InterPro" id="IPR020624">
    <property type="entry name" value="Schiff_base-form_aldolases_CS"/>
</dbReference>
<dbReference type="NCBIfam" id="TIGR00683">
    <property type="entry name" value="nanA"/>
    <property type="match status" value="1"/>
</dbReference>
<dbReference type="NCBIfam" id="NF003164">
    <property type="entry name" value="PRK04147.1"/>
    <property type="match status" value="1"/>
</dbReference>
<dbReference type="PANTHER" id="PTHR42849">
    <property type="entry name" value="N-ACETYLNEURAMINATE LYASE"/>
    <property type="match status" value="1"/>
</dbReference>
<dbReference type="PANTHER" id="PTHR42849:SF1">
    <property type="entry name" value="N-ACETYLNEURAMINATE LYASE"/>
    <property type="match status" value="1"/>
</dbReference>
<dbReference type="Pfam" id="PF00701">
    <property type="entry name" value="DHDPS"/>
    <property type="match status" value="1"/>
</dbReference>
<dbReference type="PIRSF" id="PIRSF001365">
    <property type="entry name" value="DHDPS"/>
    <property type="match status" value="1"/>
</dbReference>
<dbReference type="PRINTS" id="PR00146">
    <property type="entry name" value="DHPICSNTHASE"/>
</dbReference>
<dbReference type="SMART" id="SM01130">
    <property type="entry name" value="DHDPS"/>
    <property type="match status" value="1"/>
</dbReference>
<dbReference type="SUPFAM" id="SSF51569">
    <property type="entry name" value="Aldolase"/>
    <property type="match status" value="1"/>
</dbReference>
<dbReference type="PROSITE" id="PS00665">
    <property type="entry name" value="DHDPS_1"/>
    <property type="match status" value="1"/>
</dbReference>
<dbReference type="PROSITE" id="PS00666">
    <property type="entry name" value="DHDPS_2"/>
    <property type="match status" value="1"/>
</dbReference>
<proteinExistence type="inferred from homology"/>
<feature type="chain" id="PRO_1000139737" description="N-acetylneuraminate lyase">
    <location>
        <begin position="1"/>
        <end position="297"/>
    </location>
</feature>
<feature type="active site" description="Proton donor" evidence="1">
    <location>
        <position position="137"/>
    </location>
</feature>
<feature type="active site" description="Schiff-base intermediate with substrate" evidence="1">
    <location>
        <position position="165"/>
    </location>
</feature>
<feature type="binding site" evidence="1">
    <location>
        <position position="47"/>
    </location>
    <ligand>
        <name>aceneuramate</name>
        <dbReference type="ChEBI" id="CHEBI:173083"/>
    </ligand>
</feature>
<feature type="binding site" evidence="1">
    <location>
        <position position="48"/>
    </location>
    <ligand>
        <name>aceneuramate</name>
        <dbReference type="ChEBI" id="CHEBI:173083"/>
    </ligand>
</feature>
<feature type="binding site" evidence="1">
    <location>
        <position position="167"/>
    </location>
    <ligand>
        <name>aceneuramate</name>
        <dbReference type="ChEBI" id="CHEBI:173083"/>
    </ligand>
</feature>
<feature type="binding site" evidence="1">
    <location>
        <position position="189"/>
    </location>
    <ligand>
        <name>aceneuramate</name>
        <dbReference type="ChEBI" id="CHEBI:173083"/>
    </ligand>
</feature>
<feature type="binding site" evidence="1">
    <location>
        <position position="191"/>
    </location>
    <ligand>
        <name>aceneuramate</name>
        <dbReference type="ChEBI" id="CHEBI:173083"/>
    </ligand>
</feature>
<feature type="binding site" evidence="1">
    <location>
        <position position="192"/>
    </location>
    <ligand>
        <name>aceneuramate</name>
        <dbReference type="ChEBI" id="CHEBI:173083"/>
    </ligand>
</feature>
<feature type="binding site" evidence="1">
    <location>
        <position position="208"/>
    </location>
    <ligand>
        <name>aceneuramate</name>
        <dbReference type="ChEBI" id="CHEBI:173083"/>
    </ligand>
</feature>
<evidence type="ECO:0000255" key="1">
    <source>
        <dbReference type="HAMAP-Rule" id="MF_01237"/>
    </source>
</evidence>
<comment type="function">
    <text evidence="1">Catalyzes the reversible aldol cleavage of N-acetylneuraminic acid (sialic acid; Neu5Ac) to form pyruvate and N-acetylmannosamine (ManNAc) via a Schiff base intermediate.</text>
</comment>
<comment type="catalytic activity">
    <reaction evidence="1">
        <text>aceneuramate = aldehydo-N-acetyl-D-mannosamine + pyruvate</text>
        <dbReference type="Rhea" id="RHEA:23296"/>
        <dbReference type="ChEBI" id="CHEBI:15361"/>
        <dbReference type="ChEBI" id="CHEBI:17122"/>
        <dbReference type="ChEBI" id="CHEBI:173083"/>
        <dbReference type="EC" id="4.1.3.3"/>
    </reaction>
</comment>
<comment type="pathway">
    <text evidence="1">Amino-sugar metabolism; N-acetylneuraminate degradation; D-fructose 6-phosphate from N-acetylneuraminate: step 1/5.</text>
</comment>
<comment type="subunit">
    <text evidence="1">Homotetramer.</text>
</comment>
<comment type="subcellular location">
    <subcellularLocation>
        <location evidence="1">Cytoplasm</location>
    </subcellularLocation>
</comment>
<comment type="similarity">
    <text evidence="1">Belongs to the DapA family. NanA subfamily.</text>
</comment>
<keyword id="KW-0119">Carbohydrate metabolism</keyword>
<keyword id="KW-0963">Cytoplasm</keyword>
<keyword id="KW-0456">Lyase</keyword>
<keyword id="KW-0704">Schiff base</keyword>
<gene>
    <name evidence="1" type="primary">nanA</name>
    <name type="ordered locus">EFER_3196</name>
</gene>
<protein>
    <recommendedName>
        <fullName evidence="1">N-acetylneuraminate lyase</fullName>
        <shortName evidence="1">NAL</shortName>
        <shortName evidence="1">Neu5Ac lyase</shortName>
        <ecNumber evidence="1">4.1.3.3</ecNumber>
    </recommendedName>
    <alternativeName>
        <fullName evidence="1">N-acetylneuraminate pyruvate-lyase</fullName>
    </alternativeName>
    <alternativeName>
        <fullName evidence="1">N-acetylneuraminic acid aldolase</fullName>
    </alternativeName>
    <alternativeName>
        <fullName evidence="1">Sialate lyase</fullName>
    </alternativeName>
    <alternativeName>
        <fullName evidence="1">Sialic acid aldolase</fullName>
    </alternativeName>
    <alternativeName>
        <fullName evidence="1">Sialic acid lyase</fullName>
    </alternativeName>
</protein>
<accession>B7LRJ3</accession>
<organism>
    <name type="scientific">Escherichia fergusonii (strain ATCC 35469 / DSM 13698 / CCUG 18766 / IAM 14443 / JCM 21226 / LMG 7866 / NBRC 102419 / NCTC 12128 / CDC 0568-73)</name>
    <dbReference type="NCBI Taxonomy" id="585054"/>
    <lineage>
        <taxon>Bacteria</taxon>
        <taxon>Pseudomonadati</taxon>
        <taxon>Pseudomonadota</taxon>
        <taxon>Gammaproteobacteria</taxon>
        <taxon>Enterobacterales</taxon>
        <taxon>Enterobacteriaceae</taxon>
        <taxon>Escherichia</taxon>
    </lineage>
</organism>
<sequence>MATNLRGVMAALLTPFDQQQALDKASLRRLVQFNIQQGIDGLYVGGSTGEAFVQSLSEREQVLEIVAEEAKGKIKLIAHVGCVSTAESQQLASSAKRYGFDAVSAVTPFYYPFSFEEHCDHYRAIIDSADGLPMVVYNIPALSGVKLTLDQINTLVTLPGVGALKQTSGDLYQMEQIRREHPDLVLYNGYDEIFASGLLAGADGGIGSTYNIMGWRYQGIVKALKEGDIQTAQKLQTECNKVIDLLIKTGVFRGLKTVLHYMDVVSVPLCRKPFGPVDEKYLPELKVLAQQLMQERG</sequence>
<reference key="1">
    <citation type="journal article" date="2009" name="PLoS Genet.">
        <title>Organised genome dynamics in the Escherichia coli species results in highly diverse adaptive paths.</title>
        <authorList>
            <person name="Touchon M."/>
            <person name="Hoede C."/>
            <person name="Tenaillon O."/>
            <person name="Barbe V."/>
            <person name="Baeriswyl S."/>
            <person name="Bidet P."/>
            <person name="Bingen E."/>
            <person name="Bonacorsi S."/>
            <person name="Bouchier C."/>
            <person name="Bouvet O."/>
            <person name="Calteau A."/>
            <person name="Chiapello H."/>
            <person name="Clermont O."/>
            <person name="Cruveiller S."/>
            <person name="Danchin A."/>
            <person name="Diard M."/>
            <person name="Dossat C."/>
            <person name="Karoui M.E."/>
            <person name="Frapy E."/>
            <person name="Garry L."/>
            <person name="Ghigo J.M."/>
            <person name="Gilles A.M."/>
            <person name="Johnson J."/>
            <person name="Le Bouguenec C."/>
            <person name="Lescat M."/>
            <person name="Mangenot S."/>
            <person name="Martinez-Jehanne V."/>
            <person name="Matic I."/>
            <person name="Nassif X."/>
            <person name="Oztas S."/>
            <person name="Petit M.A."/>
            <person name="Pichon C."/>
            <person name="Rouy Z."/>
            <person name="Ruf C.S."/>
            <person name="Schneider D."/>
            <person name="Tourret J."/>
            <person name="Vacherie B."/>
            <person name="Vallenet D."/>
            <person name="Medigue C."/>
            <person name="Rocha E.P.C."/>
            <person name="Denamur E."/>
        </authorList>
    </citation>
    <scope>NUCLEOTIDE SEQUENCE [LARGE SCALE GENOMIC DNA]</scope>
    <source>
        <strain>ATCC 35469 / DSM 13698 / BCRC 15582 / CCUG 18766 / IAM 14443 / JCM 21226 / LMG 7866 / NBRC 102419 / NCTC 12128 / CDC 0568-73</strain>
    </source>
</reference>
<name>NANA_ESCF3</name>